<reference key="1">
    <citation type="journal article" date="2000" name="Dev. Genes Evol.">
        <title>An in situ hybridization screen for the rapid isolation of differentially expressed genes.</title>
        <authorList>
            <person name="Henrich T."/>
            <person name="Wittbrodt J."/>
        </authorList>
    </citation>
    <scope>NUCLEOTIDE SEQUENCE [MRNA]</scope>
</reference>
<sequence>MNDTVTIRTRKFMTNRLLQRKQMVVDVLHPGKATVPKTEIREKLAKMYKTTPDVVFVFGFRTQFGGGKTTGFAMVYDSLDYAKKNEPKHRLATHGLYEKKKTSRKQRTERQNRMKKVRSIKKASVGAAGKKN</sequence>
<accession>Q9W6X9</accession>
<proteinExistence type="evidence at transcript level"/>
<protein>
    <recommendedName>
        <fullName evidence="3">Small ribosomal subunit protein eS24</fullName>
    </recommendedName>
    <alternativeName>
        <fullName>40S ribosomal protein S24</fullName>
    </alternativeName>
</protein>
<feature type="chain" id="PRO_0000137629" description="Small ribosomal subunit protein eS24">
    <location>
        <begin position="1"/>
        <end position="132"/>
    </location>
</feature>
<feature type="region of interest" description="Disordered" evidence="2">
    <location>
        <begin position="91"/>
        <end position="132"/>
    </location>
</feature>
<feature type="compositionally biased region" description="Basic and acidic residues" evidence="2">
    <location>
        <begin position="96"/>
        <end position="112"/>
    </location>
</feature>
<organism>
    <name type="scientific">Oryzias latipes</name>
    <name type="common">Japanese rice fish</name>
    <name type="synonym">Japanese killifish</name>
    <dbReference type="NCBI Taxonomy" id="8090"/>
    <lineage>
        <taxon>Eukaryota</taxon>
        <taxon>Metazoa</taxon>
        <taxon>Chordata</taxon>
        <taxon>Craniata</taxon>
        <taxon>Vertebrata</taxon>
        <taxon>Euteleostomi</taxon>
        <taxon>Actinopterygii</taxon>
        <taxon>Neopterygii</taxon>
        <taxon>Teleostei</taxon>
        <taxon>Neoteleostei</taxon>
        <taxon>Acanthomorphata</taxon>
        <taxon>Ovalentaria</taxon>
        <taxon>Atherinomorphae</taxon>
        <taxon>Beloniformes</taxon>
        <taxon>Adrianichthyidae</taxon>
        <taxon>Oryziinae</taxon>
        <taxon>Oryzias</taxon>
    </lineage>
</organism>
<name>RS24_ORYLA</name>
<evidence type="ECO:0000250" key="1">
    <source>
        <dbReference type="UniProtKB" id="P62847"/>
    </source>
</evidence>
<evidence type="ECO:0000256" key="2">
    <source>
        <dbReference type="SAM" id="MobiDB-lite"/>
    </source>
</evidence>
<evidence type="ECO:0000305" key="3"/>
<keyword id="KW-0963">Cytoplasm</keyword>
<keyword id="KW-1185">Reference proteome</keyword>
<keyword id="KW-0687">Ribonucleoprotein</keyword>
<keyword id="KW-0689">Ribosomal protein</keyword>
<gene>
    <name type="primary">rps24</name>
</gene>
<comment type="function">
    <text evidence="1">Component of the small ribosomal subunit. The ribosome is a large ribonucleoprotein complex responsible for the synthesis of proteins in the cell. Required for processing of pre-rRNA and maturation of 40S ribosomal subunits.</text>
</comment>
<comment type="subunit">
    <text evidence="1">Component of the small ribosomal subunit.</text>
</comment>
<comment type="subcellular location">
    <subcellularLocation>
        <location evidence="1">Cytoplasm</location>
    </subcellularLocation>
</comment>
<comment type="similarity">
    <text evidence="3">Belongs to the eukaryotic ribosomal protein eS24 family.</text>
</comment>
<dbReference type="EMBL" id="AJ238272">
    <property type="protein sequence ID" value="CAB40968.1"/>
    <property type="molecule type" value="mRNA"/>
</dbReference>
<dbReference type="RefSeq" id="NP_001098233.1">
    <property type="nucleotide sequence ID" value="NM_001104763.1"/>
</dbReference>
<dbReference type="SMR" id="Q9W6X9"/>
<dbReference type="STRING" id="8090.ENSORLP00000008455"/>
<dbReference type="GeneID" id="100049365"/>
<dbReference type="KEGG" id="ola:100049365"/>
<dbReference type="CTD" id="6229"/>
<dbReference type="eggNOG" id="KOG3424">
    <property type="taxonomic scope" value="Eukaryota"/>
</dbReference>
<dbReference type="InParanoid" id="Q9W6X9"/>
<dbReference type="OrthoDB" id="5571754at2759"/>
<dbReference type="Proteomes" id="UP000001038">
    <property type="component" value="Unplaced"/>
</dbReference>
<dbReference type="Proteomes" id="UP000265180">
    <property type="component" value="Chromosome 9"/>
</dbReference>
<dbReference type="Proteomes" id="UP000265200">
    <property type="component" value="Chromosome 9"/>
</dbReference>
<dbReference type="GO" id="GO:0005737">
    <property type="term" value="C:cytoplasm"/>
    <property type="evidence" value="ECO:0007669"/>
    <property type="project" value="UniProtKB-SubCell"/>
</dbReference>
<dbReference type="GO" id="GO:0044391">
    <property type="term" value="C:ribosomal subunit"/>
    <property type="evidence" value="ECO:0007669"/>
    <property type="project" value="UniProtKB-ARBA"/>
</dbReference>
<dbReference type="GO" id="GO:0003735">
    <property type="term" value="F:structural constituent of ribosome"/>
    <property type="evidence" value="ECO:0007669"/>
    <property type="project" value="InterPro"/>
</dbReference>
<dbReference type="GO" id="GO:0006412">
    <property type="term" value="P:translation"/>
    <property type="evidence" value="ECO:0007669"/>
    <property type="project" value="InterPro"/>
</dbReference>
<dbReference type="FunFam" id="3.30.70.3370:FF:000001">
    <property type="entry name" value="40S ribosomal protein S24"/>
    <property type="match status" value="1"/>
</dbReference>
<dbReference type="Gene3D" id="3.30.70.3370">
    <property type="match status" value="1"/>
</dbReference>
<dbReference type="HAMAP" id="MF_00545">
    <property type="entry name" value="Ribosomal_eS24"/>
    <property type="match status" value="1"/>
</dbReference>
<dbReference type="InterPro" id="IPR053709">
    <property type="entry name" value="eRP_eS24_sf"/>
</dbReference>
<dbReference type="InterPro" id="IPR001976">
    <property type="entry name" value="Ribosomal_eS24"/>
</dbReference>
<dbReference type="InterPro" id="IPR018098">
    <property type="entry name" value="Ribosomal_eS24_CS"/>
</dbReference>
<dbReference type="InterPro" id="IPR012678">
    <property type="entry name" value="Ribosomal_uL23/eL15/eS24_sf"/>
</dbReference>
<dbReference type="PANTHER" id="PTHR10496">
    <property type="entry name" value="40S RIBOSOMAL PROTEIN S24"/>
    <property type="match status" value="1"/>
</dbReference>
<dbReference type="Pfam" id="PF01282">
    <property type="entry name" value="Ribosomal_S24e"/>
    <property type="match status" value="1"/>
</dbReference>
<dbReference type="SUPFAM" id="SSF54189">
    <property type="entry name" value="Ribosomal proteins S24e, L23 and L15e"/>
    <property type="match status" value="1"/>
</dbReference>
<dbReference type="PROSITE" id="PS00529">
    <property type="entry name" value="RIBOSOMAL_S24E"/>
    <property type="match status" value="1"/>
</dbReference>